<evidence type="ECO:0000250" key="1">
    <source>
        <dbReference type="UniProtKB" id="H0ZAB5"/>
    </source>
</evidence>
<evidence type="ECO:0000250" key="2">
    <source>
        <dbReference type="UniProtKB" id="O08912"/>
    </source>
</evidence>
<evidence type="ECO:0000250" key="3">
    <source>
        <dbReference type="UniProtKB" id="Q8N4A0"/>
    </source>
</evidence>
<evidence type="ECO:0000255" key="4"/>
<evidence type="ECO:0000255" key="5">
    <source>
        <dbReference type="PROSITE-ProRule" id="PRU00174"/>
    </source>
</evidence>
<evidence type="ECO:0000269" key="6">
    <source>
    </source>
</evidence>
<evidence type="ECO:0000269" key="7">
    <source>
    </source>
</evidence>
<evidence type="ECO:0000269" key="8">
    <source>
    </source>
</evidence>
<evidence type="ECO:0000269" key="9">
    <source>
    </source>
</evidence>
<evidence type="ECO:0000269" key="10">
    <source>
    </source>
</evidence>
<evidence type="ECO:0000269" key="11">
    <source>
    </source>
</evidence>
<evidence type="ECO:0000269" key="12">
    <source>
    </source>
</evidence>
<evidence type="ECO:0000269" key="13">
    <source>
    </source>
</evidence>
<evidence type="ECO:0000303" key="14">
    <source>
    </source>
</evidence>
<evidence type="ECO:0000305" key="15"/>
<accession>Q14435</accession>
<accession>Q53TG9</accession>
<accession>Q7Z476</accession>
<feature type="chain" id="PRO_0000059106" description="Polypeptide N-acetylgalactosaminyltransferase 3">
    <location>
        <begin position="1"/>
        <end position="633"/>
    </location>
</feature>
<feature type="topological domain" description="Cytoplasmic" evidence="4">
    <location>
        <begin position="1"/>
        <end position="19"/>
    </location>
</feature>
<feature type="transmembrane region" description="Helical; Signal-anchor for type II membrane protein" evidence="4">
    <location>
        <begin position="20"/>
        <end position="37"/>
    </location>
</feature>
<feature type="topological domain" description="Lumenal" evidence="4">
    <location>
        <begin position="38"/>
        <end position="633"/>
    </location>
</feature>
<feature type="domain" description="Ricin B-type lectin" evidence="5">
    <location>
        <begin position="504"/>
        <end position="630"/>
    </location>
</feature>
<feature type="region of interest" description="Catalytic subdomain A">
    <location>
        <begin position="184"/>
        <end position="293"/>
    </location>
</feature>
<feature type="region of interest" description="Catalytic subdomain B">
    <location>
        <begin position="356"/>
        <end position="418"/>
    </location>
</feature>
<feature type="binding site" evidence="1">
    <location>
        <position position="277"/>
    </location>
    <ligand>
        <name>Mn(2+)</name>
        <dbReference type="ChEBI" id="CHEBI:29035"/>
    </ligand>
</feature>
<feature type="binding site" evidence="1">
    <location>
        <position position="279"/>
    </location>
    <ligand>
        <name>Mn(2+)</name>
        <dbReference type="ChEBI" id="CHEBI:29035"/>
    </ligand>
</feature>
<feature type="binding site" evidence="1">
    <location>
        <position position="415"/>
    </location>
    <ligand>
        <name>Mn(2+)</name>
        <dbReference type="ChEBI" id="CHEBI:29035"/>
    </ligand>
</feature>
<feature type="binding site" evidence="1">
    <location>
        <position position="519"/>
    </location>
    <ligand>
        <name>UDP-N-acetyl-alpha-D-galactosamine</name>
        <dbReference type="ChEBI" id="CHEBI:67138"/>
    </ligand>
</feature>
<feature type="binding site" evidence="1">
    <location>
        <position position="522"/>
    </location>
    <ligand>
        <name>UDP-N-acetyl-alpha-D-galactosamine</name>
        <dbReference type="ChEBI" id="CHEBI:67138"/>
    </ligand>
</feature>
<feature type="binding site" evidence="1">
    <location>
        <position position="536"/>
    </location>
    <ligand>
        <name>UDP-N-acetyl-alpha-D-galactosamine</name>
        <dbReference type="ChEBI" id="CHEBI:67138"/>
    </ligand>
</feature>
<feature type="binding site" evidence="1">
    <location>
        <position position="541"/>
    </location>
    <ligand>
        <name>UDP-N-acetyl-alpha-D-galactosamine</name>
        <dbReference type="ChEBI" id="CHEBI:67138"/>
    </ligand>
</feature>
<feature type="glycosylation site" description="N-linked (GlcNAc...) asparagine" evidence="4">
    <location>
        <position position="132"/>
    </location>
</feature>
<feature type="glycosylation site" description="N-linked (GlcNAc...) asparagine" evidence="4">
    <location>
        <position position="297"/>
    </location>
</feature>
<feature type="glycosylation site" description="N-linked (GlcNAc...) asparagine" evidence="4">
    <location>
        <position position="484"/>
    </location>
</feature>
<feature type="disulfide bond" evidence="5">
    <location>
        <begin position="517"/>
        <end position="535"/>
    </location>
</feature>
<feature type="disulfide bond" evidence="5">
    <location>
        <begin position="561"/>
        <end position="574"/>
    </location>
</feature>
<feature type="disulfide bond" evidence="5">
    <location>
        <begin position="605"/>
        <end position="618"/>
    </location>
</feature>
<feature type="splice variant" id="VSP_011202" description="In isoform 2." evidence="14">
    <original>CIEQKFKRCPPLPTTSVIIV</original>
    <variation>YVEEYLLFILYHQALQGREG</variation>
    <location>
        <begin position="173"/>
        <end position="192"/>
    </location>
</feature>
<feature type="splice variant" id="VSP_011203" description="In isoform 2." evidence="14">
    <location>
        <begin position="193"/>
        <end position="633"/>
    </location>
</feature>
<feature type="sequence variant" id="VAR_080832" description="In HFTC1." evidence="7">
    <location>
        <begin position="162"/>
        <end position="633"/>
    </location>
</feature>
<feature type="mutagenesis site" description="Loss of ability to glycosylate FGF23." evidence="10">
    <original>D</original>
    <variation>H</variation>
    <location>
        <position position="277"/>
    </location>
</feature>
<feature type="mutagenesis site" description="Loss of ability to glycosylate FGF23." evidence="10">
    <location>
        <begin position="510"/>
        <end position="633"/>
    </location>
</feature>
<feature type="mutagenesis site" description="Loss of ability to glycosylate FGF23." evidence="10">
    <original>D</original>
    <variation>H</variation>
    <location>
        <position position="519"/>
    </location>
</feature>
<feature type="sequence conflict" description="In Ref. 1; CAA63371." evidence="15" ref="1">
    <original>Q</original>
    <variation>R</variation>
    <location>
        <position position="481"/>
    </location>
</feature>
<organism>
    <name type="scientific">Homo sapiens</name>
    <name type="common">Human</name>
    <dbReference type="NCBI Taxonomy" id="9606"/>
    <lineage>
        <taxon>Eukaryota</taxon>
        <taxon>Metazoa</taxon>
        <taxon>Chordata</taxon>
        <taxon>Craniata</taxon>
        <taxon>Vertebrata</taxon>
        <taxon>Euteleostomi</taxon>
        <taxon>Mammalia</taxon>
        <taxon>Eutheria</taxon>
        <taxon>Euarchontoglires</taxon>
        <taxon>Primates</taxon>
        <taxon>Haplorrhini</taxon>
        <taxon>Catarrhini</taxon>
        <taxon>Hominidae</taxon>
        <taxon>Homo</taxon>
    </lineage>
</organism>
<reference key="1">
    <citation type="journal article" date="1996" name="J. Biol. Chem.">
        <title>cDNA cloning and expression of a novel human UDP-N-acetyl-alpha-D-galactosamine polypeptide N-acetylgalactosaminyltransferase, GalNAc-T3.</title>
        <authorList>
            <person name="Bennett E.P."/>
            <person name="Hassan H."/>
            <person name="Clausen H."/>
        </authorList>
    </citation>
    <scope>NUCLEOTIDE SEQUENCE [MRNA] (ISOFORM 1)</scope>
    <scope>FUNCTION</scope>
    <scope>CATALYTIC ACTIVITY</scope>
    <scope>TISSUE SPECIFICITY</scope>
    <source>
        <tissue>Salivary gland</tissue>
    </source>
</reference>
<reference key="2">
    <citation type="journal article" date="2005" name="Nature">
        <title>Generation and annotation of the DNA sequences of human chromosomes 2 and 4.</title>
        <authorList>
            <person name="Hillier L.W."/>
            <person name="Graves T.A."/>
            <person name="Fulton R.S."/>
            <person name="Fulton L.A."/>
            <person name="Pepin K.H."/>
            <person name="Minx P."/>
            <person name="Wagner-McPherson C."/>
            <person name="Layman D."/>
            <person name="Wylie K."/>
            <person name="Sekhon M."/>
            <person name="Becker M.C."/>
            <person name="Fewell G.A."/>
            <person name="Delehaunty K.D."/>
            <person name="Miner T.L."/>
            <person name="Nash W.E."/>
            <person name="Kremitzki C."/>
            <person name="Oddy L."/>
            <person name="Du H."/>
            <person name="Sun H."/>
            <person name="Bradshaw-Cordum H."/>
            <person name="Ali J."/>
            <person name="Carter J."/>
            <person name="Cordes M."/>
            <person name="Harris A."/>
            <person name="Isak A."/>
            <person name="van Brunt A."/>
            <person name="Nguyen C."/>
            <person name="Du F."/>
            <person name="Courtney L."/>
            <person name="Kalicki J."/>
            <person name="Ozersky P."/>
            <person name="Abbott S."/>
            <person name="Armstrong J."/>
            <person name="Belter E.A."/>
            <person name="Caruso L."/>
            <person name="Cedroni M."/>
            <person name="Cotton M."/>
            <person name="Davidson T."/>
            <person name="Desai A."/>
            <person name="Elliott G."/>
            <person name="Erb T."/>
            <person name="Fronick C."/>
            <person name="Gaige T."/>
            <person name="Haakenson W."/>
            <person name="Haglund K."/>
            <person name="Holmes A."/>
            <person name="Harkins R."/>
            <person name="Kim K."/>
            <person name="Kruchowski S.S."/>
            <person name="Strong C.M."/>
            <person name="Grewal N."/>
            <person name="Goyea E."/>
            <person name="Hou S."/>
            <person name="Levy A."/>
            <person name="Martinka S."/>
            <person name="Mead K."/>
            <person name="McLellan M.D."/>
            <person name="Meyer R."/>
            <person name="Randall-Maher J."/>
            <person name="Tomlinson C."/>
            <person name="Dauphin-Kohlberg S."/>
            <person name="Kozlowicz-Reilly A."/>
            <person name="Shah N."/>
            <person name="Swearengen-Shahid S."/>
            <person name="Snider J."/>
            <person name="Strong J.T."/>
            <person name="Thompson J."/>
            <person name="Yoakum M."/>
            <person name="Leonard S."/>
            <person name="Pearman C."/>
            <person name="Trani L."/>
            <person name="Radionenko M."/>
            <person name="Waligorski J.E."/>
            <person name="Wang C."/>
            <person name="Rock S.M."/>
            <person name="Tin-Wollam A.-M."/>
            <person name="Maupin R."/>
            <person name="Latreille P."/>
            <person name="Wendl M.C."/>
            <person name="Yang S.-P."/>
            <person name="Pohl C."/>
            <person name="Wallis J.W."/>
            <person name="Spieth J."/>
            <person name="Bieri T.A."/>
            <person name="Berkowicz N."/>
            <person name="Nelson J.O."/>
            <person name="Osborne J."/>
            <person name="Ding L."/>
            <person name="Meyer R."/>
            <person name="Sabo A."/>
            <person name="Shotland Y."/>
            <person name="Sinha P."/>
            <person name="Wohldmann P.E."/>
            <person name="Cook L.L."/>
            <person name="Hickenbotham M.T."/>
            <person name="Eldred J."/>
            <person name="Williams D."/>
            <person name="Jones T.A."/>
            <person name="She X."/>
            <person name="Ciccarelli F.D."/>
            <person name="Izaurralde E."/>
            <person name="Taylor J."/>
            <person name="Schmutz J."/>
            <person name="Myers R.M."/>
            <person name="Cox D.R."/>
            <person name="Huang X."/>
            <person name="McPherson J.D."/>
            <person name="Mardis E.R."/>
            <person name="Clifton S.W."/>
            <person name="Warren W.C."/>
            <person name="Chinwalla A.T."/>
            <person name="Eddy S.R."/>
            <person name="Marra M.A."/>
            <person name="Ovcharenko I."/>
            <person name="Furey T.S."/>
            <person name="Miller W."/>
            <person name="Eichler E.E."/>
            <person name="Bork P."/>
            <person name="Suyama M."/>
            <person name="Torrents D."/>
            <person name="Waterston R.H."/>
            <person name="Wilson R.K."/>
        </authorList>
    </citation>
    <scope>NUCLEOTIDE SEQUENCE [LARGE SCALE GENOMIC DNA]</scope>
</reference>
<reference key="3">
    <citation type="submission" date="2005-09" db="EMBL/GenBank/DDBJ databases">
        <authorList>
            <person name="Mural R.J."/>
            <person name="Istrail S."/>
            <person name="Sutton G.G."/>
            <person name="Florea L."/>
            <person name="Halpern A.L."/>
            <person name="Mobarry C.M."/>
            <person name="Lippert R."/>
            <person name="Walenz B."/>
            <person name="Shatkay H."/>
            <person name="Dew I."/>
            <person name="Miller J.R."/>
            <person name="Flanigan M.J."/>
            <person name="Edwards N.J."/>
            <person name="Bolanos R."/>
            <person name="Fasulo D."/>
            <person name="Halldorsson B.V."/>
            <person name="Hannenhalli S."/>
            <person name="Turner R."/>
            <person name="Yooseph S."/>
            <person name="Lu F."/>
            <person name="Nusskern D.R."/>
            <person name="Shue B.C."/>
            <person name="Zheng X.H."/>
            <person name="Zhong F."/>
            <person name="Delcher A.L."/>
            <person name="Huson D.H."/>
            <person name="Kravitz S.A."/>
            <person name="Mouchard L."/>
            <person name="Reinert K."/>
            <person name="Remington K.A."/>
            <person name="Clark A.G."/>
            <person name="Waterman M.S."/>
            <person name="Eichler E.E."/>
            <person name="Adams M.D."/>
            <person name="Hunkapiller M.W."/>
            <person name="Myers E.W."/>
            <person name="Venter J.C."/>
        </authorList>
    </citation>
    <scope>NUCLEOTIDE SEQUENCE [LARGE SCALE GENOMIC DNA]</scope>
</reference>
<reference key="4">
    <citation type="journal article" date="2004" name="Genome Res.">
        <title>The status, quality, and expansion of the NIH full-length cDNA project: the Mammalian Gene Collection (MGC).</title>
        <authorList>
            <consortium name="The MGC Project Team"/>
        </authorList>
    </citation>
    <scope>NUCLEOTIDE SEQUENCE [LARGE SCALE MRNA] (ISOFORMS 1 AND 2)</scope>
    <source>
        <tissue>Lung</tissue>
    </source>
</reference>
<reference key="5">
    <citation type="journal article" date="1997" name="J. Biol. Chem.">
        <title>Substrate specificities of three members of the human UDP-N-acetyl-alpha-D-galactosamine:polypeptide N-acetylgalactosaminyltransferase family, GalNAc-T1, -T2, and -T3.</title>
        <authorList>
            <person name="Wandall H.H."/>
            <person name="Hassan H."/>
            <person name="Mirgorodskaya E."/>
            <person name="Kristensen A.K."/>
            <person name="Roepstorff P."/>
            <person name="Bennett E.P."/>
            <person name="Nielsen P.A."/>
            <person name="Hollingsworth M.A."/>
            <person name="Burchell J."/>
            <person name="Taylor-Papadimitriou J."/>
            <person name="Clausen H."/>
        </authorList>
    </citation>
    <scope>FUNCTION</scope>
    <scope>CATALYTIC ACTIVITY</scope>
    <scope>COFACTOR</scope>
</reference>
<reference key="6">
    <citation type="journal article" date="1998" name="J. Cell Sci.">
        <title>Localization of three human polypeptide GalNAc-transferases in HeLa cells suggests initiation of O-linked glycosylation throughout the Golgi apparatus.</title>
        <authorList>
            <person name="Roettger S."/>
            <person name="White J."/>
            <person name="Wandall H.H."/>
            <person name="Olivo J.-C."/>
            <person name="Stark A."/>
            <person name="Bennett E.P."/>
            <person name="Whitehouse C."/>
            <person name="Berger E.G."/>
            <person name="Clausen H."/>
            <person name="Nilsson T."/>
        </authorList>
    </citation>
    <scope>SUBCELLULAR LOCATION</scope>
</reference>
<reference key="7">
    <citation type="journal article" date="2003" name="Cancer Sci.">
        <title>Prognostic significance of UDP-N-acetyl-alpha-D-galactosamine:polypeptide N-acetylgalactosaminyltransferase-3 (GalNAc-T3) expression in patients with gastric carcinoma.</title>
        <authorList>
            <person name="Onitsuka K."/>
            <person name="Shibao K."/>
            <person name="Nakayama Y."/>
            <person name="Minagawa N."/>
            <person name="Hirata K."/>
            <person name="Izumi H."/>
            <person name="Matsuo K."/>
            <person name="Nagata N."/>
            <person name="Kitazato K."/>
            <person name="Kohno K."/>
            <person name="Itoh H."/>
        </authorList>
    </citation>
    <scope>TISSUE SPECIFICITY</scope>
</reference>
<reference key="8">
    <citation type="journal article" date="2004" name="Nat. Genet.">
        <title>Mutations in GALNT3, encoding a protein involved in O-linked glycosylation, cause familial tumoral calcinosis.</title>
        <authorList>
            <person name="Topaz O."/>
            <person name="Shurman D.L."/>
            <person name="Bergman R."/>
            <person name="Indelman M."/>
            <person name="Ratajczak P."/>
            <person name="Mizrachi M."/>
            <person name="Khamaysi Z."/>
            <person name="Behar D."/>
            <person name="Petronius D."/>
            <person name="Friedman V."/>
            <person name="Zelikovic I."/>
            <person name="Raimer S."/>
            <person name="Metzker A."/>
            <person name="Richard G."/>
            <person name="Sprecher E."/>
        </authorList>
    </citation>
    <scope>INVOLVEMENT IN HFTC1</scope>
    <scope>VARIANT HFTC 162-ARG--ASP-633 DEL</scope>
</reference>
<reference key="9">
    <citation type="journal article" date="2005" name="J. Mol. Med.">
        <title>Identification of a recurrent mutation in GALNT3 demonstrates that hyperostosis-hyperphosphatemia syndrome and familial tumoral calcinosis are allelic disorders.</title>
        <authorList>
            <person name="Frishberg Y."/>
            <person name="Topaz O."/>
            <person name="Bergman R."/>
            <person name="Behar D."/>
            <person name="Fisher D."/>
            <person name="Gordon D."/>
            <person name="Richard G."/>
            <person name="Sprecher E."/>
        </authorList>
    </citation>
    <scope>INVOLVEMENT IN HFTC1</scope>
</reference>
<reference key="10">
    <citation type="journal article" date="2006" name="J. Biol. Chem.">
        <title>Polypeptide GalNAc-transferase T3 and familial tumoral calcinosis. Secretion of fibroblast growth factor 23 requires O-glycosylation.</title>
        <authorList>
            <person name="Kato K."/>
            <person name="Jeanneau C."/>
            <person name="Tarp M.A."/>
            <person name="Benet-Pages A."/>
            <person name="Lorenz-Depiereux B."/>
            <person name="Bennett E.P."/>
            <person name="Mandel U."/>
            <person name="Strom T.M."/>
            <person name="Clausen H."/>
        </authorList>
    </citation>
    <scope>FUNCTION</scope>
    <scope>CATALYTIC ACTIVITY</scope>
</reference>
<reference key="11">
    <citation type="journal article" date="2011" name="BMC Syst. Biol.">
        <title>Initial characterization of the human central proteome.</title>
        <authorList>
            <person name="Burkard T.R."/>
            <person name="Planyavsky M."/>
            <person name="Kaupe I."/>
            <person name="Breitwieser F.P."/>
            <person name="Buerckstuemmer T."/>
            <person name="Bennett K.L."/>
            <person name="Superti-Furga G."/>
            <person name="Colinge J."/>
        </authorList>
    </citation>
    <scope>IDENTIFICATION BY MASS SPECTROMETRY [LARGE SCALE ANALYSIS]</scope>
</reference>
<reference key="12">
    <citation type="journal article" date="2020" name="Nat. Chem. Biol.">
        <title>Molecular basis for fibroblast growth factor 23 O-glycosylation by GalNAc-T3.</title>
        <authorList>
            <person name="de Las Rivas M."/>
            <person name="Paul Daniel E.J."/>
            <person name="Narimatsu Y."/>
            <person name="Companon I."/>
            <person name="Kato K."/>
            <person name="Hermosilla P."/>
            <person name="Thureau A."/>
            <person name="Ceballos-Laita L."/>
            <person name="Coelho H."/>
            <person name="Bernado P."/>
            <person name="Marcelo F."/>
            <person name="Hansen L."/>
            <person name="Maeda R."/>
            <person name="Lostao A."/>
            <person name="Corzana F."/>
            <person name="Clausen H."/>
            <person name="Gerken T.A."/>
            <person name="Hurtado-Guerrero R."/>
        </authorList>
    </citation>
    <scope>X-RAY SCATTERING SOLUTION STRUCTURE</scope>
    <scope>FUNCTION</scope>
    <scope>CATALYTIC ACTIVITY</scope>
    <scope>BIOPHYSICOCHEMICAL PROPERTIES</scope>
    <scope>RICIN B-TYPE LECTIN DOMAIN</scope>
    <scope>MUTAGENESIS OF ASP-277; 510-LYS--ASP-633 AND ASP-519</scope>
</reference>
<comment type="function">
    <text evidence="9 10 11 12">Catalyzes the initial reaction in O-linked oligosaccharide biosynthesis, the transfer of an N-acetyl-D-galactosamine residue to a serine or threonine residue on the protein receptor (PubMed:16638743, PubMed:31932717, PubMed:8663203, PubMed:9295285). Has activity toward HIV envelope glycoprotein gp120, EA2, MUC2, MUC1A and MUC5AC (PubMed:8663203, PubMed:9295285). Probably glycosylates fibronectin in vivo (PubMed:9295285). Glycosylates FGF23 (PubMed:16638743, PubMed:31932717).</text>
</comment>
<comment type="catalytic activity">
    <reaction evidence="11 12">
        <text>L-seryl-[protein] + UDP-N-acetyl-alpha-D-galactosamine = a 3-O-[N-acetyl-alpha-D-galactosaminyl]-L-seryl-[protein] + UDP + H(+)</text>
        <dbReference type="Rhea" id="RHEA:23956"/>
        <dbReference type="Rhea" id="RHEA-COMP:9863"/>
        <dbReference type="Rhea" id="RHEA-COMP:12788"/>
        <dbReference type="ChEBI" id="CHEBI:15378"/>
        <dbReference type="ChEBI" id="CHEBI:29999"/>
        <dbReference type="ChEBI" id="CHEBI:53604"/>
        <dbReference type="ChEBI" id="CHEBI:58223"/>
        <dbReference type="ChEBI" id="CHEBI:67138"/>
        <dbReference type="EC" id="2.4.1.41"/>
    </reaction>
</comment>
<comment type="catalytic activity">
    <reaction evidence="9 10 11 12">
        <text>L-threonyl-[protein] + UDP-N-acetyl-alpha-D-galactosamine = a 3-O-[N-acetyl-alpha-D-galactosaminyl]-L-threonyl-[protein] + UDP + H(+)</text>
        <dbReference type="Rhea" id="RHEA:52424"/>
        <dbReference type="Rhea" id="RHEA-COMP:11060"/>
        <dbReference type="Rhea" id="RHEA-COMP:11689"/>
        <dbReference type="ChEBI" id="CHEBI:15378"/>
        <dbReference type="ChEBI" id="CHEBI:30013"/>
        <dbReference type="ChEBI" id="CHEBI:58223"/>
        <dbReference type="ChEBI" id="CHEBI:67138"/>
        <dbReference type="ChEBI" id="CHEBI:87075"/>
        <dbReference type="EC" id="2.4.1.41"/>
    </reaction>
</comment>
<comment type="cofactor">
    <cofactor evidence="12">
        <name>Mn(2+)</name>
        <dbReference type="ChEBI" id="CHEBI:29035"/>
    </cofactor>
</comment>
<comment type="biophysicochemical properties">
    <kinetics>
        <KM evidence="10">36 uM for FGF23 NAPIPRRHTRSAEDDS peptide</KM>
        <KM evidence="10">423 uM for FGF23 HFNTPIPRRH peptide</KM>
        <KM evidence="12">0.5 mM for MUC1A APPAHGVTSAPDTRPAPGC peptide</KM>
        <KM evidence="12">0.1 mM for MUC2 PTTTPISTTTMVTPTPTPTC peptide</KM>
    </kinetics>
</comment>
<comment type="pathway">
    <text>Protein modification; protein glycosylation.</text>
</comment>
<comment type="interaction">
    <interactant intactId="EBI-10232904">
        <id>Q14435-2</id>
    </interactant>
    <interactant intactId="EBI-743771">
        <id>Q92624</id>
        <label>APPBP2</label>
    </interactant>
    <organismsDiffer>false</organismsDiffer>
    <experiments>3</experiments>
</comment>
<comment type="subcellular location">
    <subcellularLocation>
        <location evidence="13">Golgi apparatus</location>
        <location evidence="13">Golgi stack membrane</location>
        <topology evidence="13">Single-pass type II membrane protein</topology>
    </subcellularLocation>
    <text>Resides preferentially in the trans and medial parts of the Golgi stack.</text>
</comment>
<comment type="alternative products">
    <event type="alternative splicing"/>
    <isoform>
        <id>Q14435-1</id>
        <name>1</name>
        <sequence type="displayed"/>
    </isoform>
    <isoform>
        <id>Q14435-2</id>
        <name>2</name>
        <sequence type="described" ref="VSP_011202 VSP_011203"/>
    </isoform>
</comment>
<comment type="tissue specificity">
    <text evidence="6 11">Expressed in organs that contain secretory epithelial glands. Highly expressed in pancreas, skin, kidney and testis. Weakly expressed in prostate, ovary, intestine and colon. Also expressed in placenta and lung and fetal lung and fetal kidney.</text>
</comment>
<comment type="domain">
    <text evidence="2">There are two conserved domains in the glycosyltransferase region: the N-terminal domain (domain A, also called GT1 motif), which is probably involved in manganese coordination and substrate binding and the C-terminal domain (domain B, also called Gal/GalNAc-T motif), which is probably involved in catalytic reaction and UDP-Gal binding.</text>
</comment>
<comment type="domain">
    <text evidence="3 10">The ricin B-type lectin domain binds to GalNAc and contributes to the glycopeptide specificity (By similarity). Essential for glycosylation of FGF23 (PubMed:31932717).</text>
</comment>
<comment type="disease" evidence="7 8">
    <disease id="DI-00573">
        <name>Tumoral calcinosis, hyperphosphatemic, familial, 1</name>
        <acronym>HFTC1</acronym>
        <description>A form of hyperphosphatemic tumoral calcinosis, a rare autosomal recessive metabolic disorder that manifests with hyperphosphatemia and massive calcium deposits in the skin and subcutaneous tissues. Some patients have recurrent, transient, painful swellings of the long bones associated with the radiographic findings of periosteal reaction and cortical hyperostosis and absence of skin involvement.</description>
        <dbReference type="MIM" id="211900"/>
    </disease>
    <text>The disease is caused by variants affecting the gene represented in this entry.</text>
</comment>
<comment type="miscellaneous">
    <text>Overexpressed in many differentiated carcinomas, suggesting that it may serve as a marker of tumor differentiation.</text>
</comment>
<comment type="similarity">
    <text evidence="15">Belongs to the glycosyltransferase 2 family. GalNAc-T subfamily.</text>
</comment>
<comment type="sequence caution" evidence="15">
    <conflict type="erroneous initiation">
        <sequence resource="EMBL-CDS" id="AAH56246"/>
    </conflict>
    <text>Truncated N-terminus.</text>
</comment>
<comment type="online information" name="Functional Glycomics Gateway - GTase">
    <link uri="http://www.functionalglycomics.org/glycomics/molecule/jsp/glycoEnzyme/viewGlycoEnzyme.jsp?gbpId=gt_hum_485"/>
    <text>Polypeptide N-acetylgalactosaminyltransferase 3</text>
</comment>
<dbReference type="EC" id="2.4.1.41" evidence="9 10 11 12"/>
<dbReference type="EMBL" id="X92689">
    <property type="protein sequence ID" value="CAA63371.1"/>
    <property type="molecule type" value="mRNA"/>
</dbReference>
<dbReference type="EMBL" id="AC009495">
    <property type="protein sequence ID" value="AAY14678.1"/>
    <property type="molecule type" value="Genomic_DNA"/>
</dbReference>
<dbReference type="EMBL" id="CH471058">
    <property type="protein sequence ID" value="EAX11324.1"/>
    <property type="molecule type" value="Genomic_DNA"/>
</dbReference>
<dbReference type="EMBL" id="BC056246">
    <property type="protein sequence ID" value="AAH56246.1"/>
    <property type="status" value="ALT_INIT"/>
    <property type="molecule type" value="mRNA"/>
</dbReference>
<dbReference type="EMBL" id="BC113565">
    <property type="protein sequence ID" value="AAI13566.1"/>
    <property type="molecule type" value="mRNA"/>
</dbReference>
<dbReference type="EMBL" id="BC113567">
    <property type="protein sequence ID" value="AAI13568.1"/>
    <property type="molecule type" value="mRNA"/>
</dbReference>
<dbReference type="CCDS" id="CCDS2226.1">
    <molecule id="Q14435-1"/>
</dbReference>
<dbReference type="RefSeq" id="NP_004473.2">
    <molecule id="Q14435-1"/>
    <property type="nucleotide sequence ID" value="NM_004482.4"/>
</dbReference>
<dbReference type="RefSeq" id="XP_005246506.1">
    <molecule id="Q14435-1"/>
    <property type="nucleotide sequence ID" value="XM_005246449.2"/>
</dbReference>
<dbReference type="RefSeq" id="XP_011509231.1">
    <molecule id="Q14435-1"/>
    <property type="nucleotide sequence ID" value="XM_011510929.2"/>
</dbReference>
<dbReference type="RefSeq" id="XP_016859259.1">
    <molecule id="Q14435-1"/>
    <property type="nucleotide sequence ID" value="XM_017003770.2"/>
</dbReference>
<dbReference type="SMR" id="Q14435"/>
<dbReference type="BioGRID" id="108863">
    <property type="interactions" value="29"/>
</dbReference>
<dbReference type="FunCoup" id="Q14435">
    <property type="interactions" value="315"/>
</dbReference>
<dbReference type="IntAct" id="Q14435">
    <property type="interactions" value="11"/>
</dbReference>
<dbReference type="STRING" id="9606.ENSP00000376465"/>
<dbReference type="BindingDB" id="Q14435"/>
<dbReference type="ChEMBL" id="CHEMBL4523291"/>
<dbReference type="CAZy" id="CBM13">
    <property type="family name" value="Carbohydrate-Binding Module Family 13"/>
</dbReference>
<dbReference type="CAZy" id="GT27">
    <property type="family name" value="Glycosyltransferase Family 27"/>
</dbReference>
<dbReference type="GlyConnect" id="1620">
    <property type="glycosylation" value="3 N-Linked glycans (1 site)"/>
</dbReference>
<dbReference type="GlyCosmos" id="Q14435">
    <property type="glycosylation" value="3 sites, 3 glycans"/>
</dbReference>
<dbReference type="GlyGen" id="Q14435">
    <property type="glycosylation" value="10 sites, 6 N-linked glycans (1 site), 1 O-linked glycan (3 sites)"/>
</dbReference>
<dbReference type="iPTMnet" id="Q14435"/>
<dbReference type="PhosphoSitePlus" id="Q14435"/>
<dbReference type="SwissPalm" id="Q14435"/>
<dbReference type="BioMuta" id="GALNT3"/>
<dbReference type="DMDM" id="209572629"/>
<dbReference type="jPOST" id="Q14435"/>
<dbReference type="MassIVE" id="Q14435"/>
<dbReference type="PaxDb" id="9606-ENSP00000376465"/>
<dbReference type="PeptideAtlas" id="Q14435"/>
<dbReference type="ProteomicsDB" id="59988">
    <molecule id="Q14435-1"/>
</dbReference>
<dbReference type="ProteomicsDB" id="59989">
    <molecule id="Q14435-2"/>
</dbReference>
<dbReference type="Pumba" id="Q14435"/>
<dbReference type="Antibodypedia" id="2358">
    <property type="antibodies" value="168 antibodies from 25 providers"/>
</dbReference>
<dbReference type="DNASU" id="2591"/>
<dbReference type="Ensembl" id="ENST00000392701.8">
    <molecule id="Q14435-1"/>
    <property type="protein sequence ID" value="ENSP00000376465.3"/>
    <property type="gene ID" value="ENSG00000115339.15"/>
</dbReference>
<dbReference type="Ensembl" id="ENST00000715282.1">
    <molecule id="Q14435-1"/>
    <property type="protein sequence ID" value="ENSP00000520447.1"/>
    <property type="gene ID" value="ENSG00000115339.15"/>
</dbReference>
<dbReference type="GeneID" id="2591"/>
<dbReference type="KEGG" id="hsa:2591"/>
<dbReference type="MANE-Select" id="ENST00000392701.8">
    <property type="protein sequence ID" value="ENSP00000376465.3"/>
    <property type="RefSeq nucleotide sequence ID" value="NM_004482.4"/>
    <property type="RefSeq protein sequence ID" value="NP_004473.2"/>
</dbReference>
<dbReference type="UCSC" id="uc010fph.2">
    <molecule id="Q14435-1"/>
    <property type="organism name" value="human"/>
</dbReference>
<dbReference type="AGR" id="HGNC:4125"/>
<dbReference type="CTD" id="2591"/>
<dbReference type="DisGeNET" id="2591"/>
<dbReference type="GeneCards" id="GALNT3"/>
<dbReference type="GeneReviews" id="GALNT3"/>
<dbReference type="HGNC" id="HGNC:4125">
    <property type="gene designation" value="GALNT3"/>
</dbReference>
<dbReference type="HPA" id="ENSG00000115339">
    <property type="expression patterns" value="Tissue enhanced (stomach)"/>
</dbReference>
<dbReference type="MalaCards" id="GALNT3"/>
<dbReference type="MIM" id="211900">
    <property type="type" value="phenotype"/>
</dbReference>
<dbReference type="MIM" id="601756">
    <property type="type" value="gene"/>
</dbReference>
<dbReference type="neXtProt" id="NX_Q14435"/>
<dbReference type="OpenTargets" id="ENSG00000115339"/>
<dbReference type="Orphanet" id="306661">
    <property type="disease" value="Familial hyperphosphatemic tumoral calcinosis/Hyperphosphatemic hyperostosis syndrome"/>
</dbReference>
<dbReference type="PharmGKB" id="PA28538"/>
<dbReference type="VEuPathDB" id="HostDB:ENSG00000115339"/>
<dbReference type="eggNOG" id="KOG3736">
    <property type="taxonomic scope" value="Eukaryota"/>
</dbReference>
<dbReference type="GeneTree" id="ENSGT00940000156609"/>
<dbReference type="InParanoid" id="Q14435"/>
<dbReference type="OMA" id="IGCKLGF"/>
<dbReference type="OrthoDB" id="416652at2759"/>
<dbReference type="PAN-GO" id="Q14435">
    <property type="GO annotations" value="3 GO annotations based on evolutionary models"/>
</dbReference>
<dbReference type="PhylomeDB" id="Q14435"/>
<dbReference type="TreeFam" id="TF313267"/>
<dbReference type="BRENDA" id="2.4.1.41">
    <property type="organism ID" value="2681"/>
</dbReference>
<dbReference type="PathwayCommons" id="Q14435"/>
<dbReference type="Reactome" id="R-HSA-190372">
    <property type="pathway name" value="FGFR3c ligand binding and activation"/>
</dbReference>
<dbReference type="Reactome" id="R-HSA-5083625">
    <property type="pathway name" value="Defective GALNT3 causes HFTC"/>
</dbReference>
<dbReference type="Reactome" id="R-HSA-913709">
    <property type="pathway name" value="O-linked glycosylation of mucins"/>
</dbReference>
<dbReference type="SignaLink" id="Q14435"/>
<dbReference type="UniPathway" id="UPA00378"/>
<dbReference type="BioGRID-ORCS" id="2591">
    <property type="hits" value="11 hits in 1145 CRISPR screens"/>
</dbReference>
<dbReference type="ChiTaRS" id="GALNT3">
    <property type="organism name" value="human"/>
</dbReference>
<dbReference type="GeneWiki" id="GALNT3"/>
<dbReference type="GenomeRNAi" id="2591"/>
<dbReference type="Pharos" id="Q14435">
    <property type="development level" value="Tbio"/>
</dbReference>
<dbReference type="PRO" id="PR:Q14435"/>
<dbReference type="Proteomes" id="UP000005640">
    <property type="component" value="Chromosome 2"/>
</dbReference>
<dbReference type="RNAct" id="Q14435">
    <property type="molecule type" value="protein"/>
</dbReference>
<dbReference type="Bgee" id="ENSG00000115339">
    <property type="expression patterns" value="Expressed in mucosa of sigmoid colon and 149 other cell types or tissues"/>
</dbReference>
<dbReference type="ExpressionAtlas" id="Q14435">
    <property type="expression patterns" value="baseline and differential"/>
</dbReference>
<dbReference type="GO" id="GO:0070062">
    <property type="term" value="C:extracellular exosome"/>
    <property type="evidence" value="ECO:0007005"/>
    <property type="project" value="UniProtKB"/>
</dbReference>
<dbReference type="GO" id="GO:0005794">
    <property type="term" value="C:Golgi apparatus"/>
    <property type="evidence" value="ECO:0000314"/>
    <property type="project" value="HPA"/>
</dbReference>
<dbReference type="GO" id="GO:0032580">
    <property type="term" value="C:Golgi cisterna membrane"/>
    <property type="evidence" value="ECO:0007669"/>
    <property type="project" value="UniProtKB-SubCell"/>
</dbReference>
<dbReference type="GO" id="GO:0000139">
    <property type="term" value="C:Golgi membrane"/>
    <property type="evidence" value="ECO:0000304"/>
    <property type="project" value="Reactome"/>
</dbReference>
<dbReference type="GO" id="GO:0016020">
    <property type="term" value="C:membrane"/>
    <property type="evidence" value="ECO:0000304"/>
    <property type="project" value="ProtInc"/>
</dbReference>
<dbReference type="GO" id="GO:0048471">
    <property type="term" value="C:perinuclear region of cytoplasm"/>
    <property type="evidence" value="ECO:0000314"/>
    <property type="project" value="BHF-UCL"/>
</dbReference>
<dbReference type="GO" id="GO:0005509">
    <property type="term" value="F:calcium ion binding"/>
    <property type="evidence" value="ECO:0000314"/>
    <property type="project" value="BHF-UCL"/>
</dbReference>
<dbReference type="GO" id="GO:0030246">
    <property type="term" value="F:carbohydrate binding"/>
    <property type="evidence" value="ECO:0007669"/>
    <property type="project" value="UniProtKB-KW"/>
</dbReference>
<dbReference type="GO" id="GO:0030145">
    <property type="term" value="F:manganese ion binding"/>
    <property type="evidence" value="ECO:0000314"/>
    <property type="project" value="BHF-UCL"/>
</dbReference>
<dbReference type="GO" id="GO:0004653">
    <property type="term" value="F:polypeptide N-acetylgalactosaminyltransferase activity"/>
    <property type="evidence" value="ECO:0000314"/>
    <property type="project" value="UniProtKB"/>
</dbReference>
<dbReference type="GO" id="GO:0006915">
    <property type="term" value="P:apoptotic process"/>
    <property type="evidence" value="ECO:0007669"/>
    <property type="project" value="Ensembl"/>
</dbReference>
<dbReference type="GO" id="GO:0005975">
    <property type="term" value="P:carbohydrate metabolic process"/>
    <property type="evidence" value="ECO:0000303"/>
    <property type="project" value="ProtInc"/>
</dbReference>
<dbReference type="GO" id="GO:0048469">
    <property type="term" value="P:cell maturation"/>
    <property type="evidence" value="ECO:0007669"/>
    <property type="project" value="Ensembl"/>
</dbReference>
<dbReference type="GO" id="GO:0002063">
    <property type="term" value="P:chondrocyte development"/>
    <property type="evidence" value="ECO:0007669"/>
    <property type="project" value="Ensembl"/>
</dbReference>
<dbReference type="GO" id="GO:0001958">
    <property type="term" value="P:endochondral ossification"/>
    <property type="evidence" value="ECO:0007669"/>
    <property type="project" value="Ensembl"/>
</dbReference>
<dbReference type="GO" id="GO:0008543">
    <property type="term" value="P:fibroblast growth factor receptor signaling pathway"/>
    <property type="evidence" value="ECO:0000304"/>
    <property type="project" value="Reactome"/>
</dbReference>
<dbReference type="GO" id="GO:0010467">
    <property type="term" value="P:gene expression"/>
    <property type="evidence" value="ECO:0007669"/>
    <property type="project" value="Ensembl"/>
</dbReference>
<dbReference type="GO" id="GO:0060173">
    <property type="term" value="P:limb development"/>
    <property type="evidence" value="ECO:0007669"/>
    <property type="project" value="Ensembl"/>
</dbReference>
<dbReference type="GO" id="GO:0035264">
    <property type="term" value="P:multicellular organism growth"/>
    <property type="evidence" value="ECO:0007669"/>
    <property type="project" value="Ensembl"/>
</dbReference>
<dbReference type="GO" id="GO:0016266">
    <property type="term" value="P:O-glycan processing"/>
    <property type="evidence" value="ECO:0000304"/>
    <property type="project" value="Reactome"/>
</dbReference>
<dbReference type="GO" id="GO:0005976">
    <property type="term" value="P:polysaccharide metabolic process"/>
    <property type="evidence" value="ECO:0007669"/>
    <property type="project" value="Ensembl"/>
</dbReference>
<dbReference type="GO" id="GO:0006493">
    <property type="term" value="P:protein O-linked glycosylation"/>
    <property type="evidence" value="ECO:0000314"/>
    <property type="project" value="UniProtKB"/>
</dbReference>
<dbReference type="GO" id="GO:0018242">
    <property type="term" value="P:protein O-linked glycosylation via serine"/>
    <property type="evidence" value="ECO:0000314"/>
    <property type="project" value="BHF-UCL"/>
</dbReference>
<dbReference type="GO" id="GO:0018243">
    <property type="term" value="P:protein O-linked glycosylation via threonine"/>
    <property type="evidence" value="ECO:0000314"/>
    <property type="project" value="UniProtKB"/>
</dbReference>
<dbReference type="GO" id="GO:0007283">
    <property type="term" value="P:spermatogenesis"/>
    <property type="evidence" value="ECO:0007669"/>
    <property type="project" value="Ensembl"/>
</dbReference>
<dbReference type="CDD" id="cd23468">
    <property type="entry name" value="beta-trefoil_Ricin_GALNT3"/>
    <property type="match status" value="1"/>
</dbReference>
<dbReference type="CDD" id="cd02510">
    <property type="entry name" value="pp-GalNAc-T"/>
    <property type="match status" value="1"/>
</dbReference>
<dbReference type="FunFam" id="2.80.10.50:FF:000024">
    <property type="entry name" value="Polypeptide N-acetylgalactosaminyltransferase"/>
    <property type="match status" value="1"/>
</dbReference>
<dbReference type="FunFam" id="3.90.550.10:FF:000039">
    <property type="entry name" value="Polypeptide N-acetylgalactosaminyltransferase"/>
    <property type="match status" value="1"/>
</dbReference>
<dbReference type="Gene3D" id="2.80.10.50">
    <property type="match status" value="1"/>
</dbReference>
<dbReference type="Gene3D" id="3.90.550.10">
    <property type="entry name" value="Spore Coat Polysaccharide Biosynthesis Protein SpsA, Chain A"/>
    <property type="match status" value="1"/>
</dbReference>
<dbReference type="InterPro" id="IPR045885">
    <property type="entry name" value="GalNAc-T"/>
</dbReference>
<dbReference type="InterPro" id="IPR001173">
    <property type="entry name" value="Glyco_trans_2-like"/>
</dbReference>
<dbReference type="InterPro" id="IPR029044">
    <property type="entry name" value="Nucleotide-diphossugar_trans"/>
</dbReference>
<dbReference type="InterPro" id="IPR035992">
    <property type="entry name" value="Ricin_B-like_lectins"/>
</dbReference>
<dbReference type="InterPro" id="IPR000772">
    <property type="entry name" value="Ricin_B_lectin"/>
</dbReference>
<dbReference type="PANTHER" id="PTHR11675">
    <property type="entry name" value="N-ACETYLGALACTOSAMINYLTRANSFERASE"/>
    <property type="match status" value="1"/>
</dbReference>
<dbReference type="PANTHER" id="PTHR11675:SF33">
    <property type="entry name" value="POLYPEPTIDE N-ACETYLGALACTOSAMINYLTRANSFERASE 3"/>
    <property type="match status" value="1"/>
</dbReference>
<dbReference type="Pfam" id="PF00535">
    <property type="entry name" value="Glycos_transf_2"/>
    <property type="match status" value="1"/>
</dbReference>
<dbReference type="Pfam" id="PF00652">
    <property type="entry name" value="Ricin_B_lectin"/>
    <property type="match status" value="1"/>
</dbReference>
<dbReference type="SMART" id="SM00458">
    <property type="entry name" value="RICIN"/>
    <property type="match status" value="1"/>
</dbReference>
<dbReference type="SUPFAM" id="SSF53448">
    <property type="entry name" value="Nucleotide-diphospho-sugar transferases"/>
    <property type="match status" value="1"/>
</dbReference>
<dbReference type="SUPFAM" id="SSF50370">
    <property type="entry name" value="Ricin B-like lectins"/>
    <property type="match status" value="1"/>
</dbReference>
<dbReference type="PROSITE" id="PS50231">
    <property type="entry name" value="RICIN_B_LECTIN"/>
    <property type="match status" value="1"/>
</dbReference>
<proteinExistence type="evidence at protein level"/>
<sequence>MAHLKRLVKLHIKRHYHKKFWKLGAVIFFFIIVLVLMQREVSVQYSKEESRMERNMKNKNKMLDLMLEAVNNIKDAMPKMQIGAPVRQNIDAGERPCLQGYYTAAELKPVLDRPPQDSNAPGASGKAFKTTNLSVEEQKEKERGEAKHCFNAFASDRISLHRDLGPDTRPPECIEQKFKRCPPLPTTSVIIVFHNEAWSTLLRTVHSVLYSSPAILLKEIILVDDASVDEYLHDKLDEYVKQFSIVKIVRQRERKGLITARLLGATVATAETLTFLDAHCECFYGWLEPLLARIAENYTAVVSPDIASIDLNTFEFNKPSPYGSNHNRGNFDWSLSFGWESLPDHEKQRRKDETYPIKTPTFAGGLFSISKEYFEYIGSYDEEMEIWGGENIEMSFRVWQCGGQLEIMPCSVVGHVFRSKSPHSFPKGTQVIARNQVRLAEVWMDEYKEIFYRRNTDAAKIVKQKAFGDLSKRFEIKHRLQCKNFTWYLNNIYPEVYVPDLNPVISGYIKSVGQPLCLDVGENNQGGKPLIMYTCHGLGGNQYFEYSAQHEIRHNIQKELCLHAAQGLVQLKACTYKGHKTVVTGEQIWEIQKDQLLYNPFLKMCLSANGEHPSLVSCNPSDPLQKWILSQND</sequence>
<gene>
    <name type="primary">GALNT3</name>
</gene>
<name>GALT3_HUMAN</name>
<protein>
    <recommendedName>
        <fullName>Polypeptide N-acetylgalactosaminyltransferase 3</fullName>
        <ecNumber evidence="9 10 11 12">2.4.1.41</ecNumber>
    </recommendedName>
    <alternativeName>
        <fullName>Polypeptide GalNAc transferase 3</fullName>
        <shortName>GalNAc-T3</shortName>
        <shortName>pp-GaNTase 3</shortName>
    </alternativeName>
    <alternativeName>
        <fullName>Protein-UDP acetylgalactosaminyltransferase 3</fullName>
    </alternativeName>
    <alternativeName>
        <fullName>UDP-GalNAc:polypeptide N-acetylgalactosaminyltransferase 3</fullName>
    </alternativeName>
</protein>
<keyword id="KW-0025">Alternative splicing</keyword>
<keyword id="KW-0225">Disease variant</keyword>
<keyword id="KW-1015">Disulfide bond</keyword>
<keyword id="KW-0325">Glycoprotein</keyword>
<keyword id="KW-0328">Glycosyltransferase</keyword>
<keyword id="KW-0333">Golgi apparatus</keyword>
<keyword id="KW-0430">Lectin</keyword>
<keyword id="KW-0464">Manganese</keyword>
<keyword id="KW-0472">Membrane</keyword>
<keyword id="KW-0479">Metal-binding</keyword>
<keyword id="KW-1267">Proteomics identification</keyword>
<keyword id="KW-1185">Reference proteome</keyword>
<keyword id="KW-0735">Signal-anchor</keyword>
<keyword id="KW-0808">Transferase</keyword>
<keyword id="KW-0812">Transmembrane</keyword>
<keyword id="KW-1133">Transmembrane helix</keyword>